<comment type="catalytic activity">
    <reaction evidence="1">
        <text>CMP + ATP = CDP + ADP</text>
        <dbReference type="Rhea" id="RHEA:11600"/>
        <dbReference type="ChEBI" id="CHEBI:30616"/>
        <dbReference type="ChEBI" id="CHEBI:58069"/>
        <dbReference type="ChEBI" id="CHEBI:60377"/>
        <dbReference type="ChEBI" id="CHEBI:456216"/>
        <dbReference type="EC" id="2.7.4.25"/>
    </reaction>
</comment>
<comment type="catalytic activity">
    <reaction evidence="1">
        <text>dCMP + ATP = dCDP + ADP</text>
        <dbReference type="Rhea" id="RHEA:25094"/>
        <dbReference type="ChEBI" id="CHEBI:30616"/>
        <dbReference type="ChEBI" id="CHEBI:57566"/>
        <dbReference type="ChEBI" id="CHEBI:58593"/>
        <dbReference type="ChEBI" id="CHEBI:456216"/>
        <dbReference type="EC" id="2.7.4.25"/>
    </reaction>
</comment>
<comment type="subcellular location">
    <subcellularLocation>
        <location evidence="1">Cytoplasm</location>
    </subcellularLocation>
</comment>
<comment type="similarity">
    <text evidence="1">Belongs to the cytidylate kinase family. Type 1 subfamily.</text>
</comment>
<comment type="sequence caution" evidence="2">
    <conflict type="erroneous initiation">
        <sequence resource="EMBL-CDS" id="AAF95064"/>
    </conflict>
</comment>
<keyword id="KW-0067">ATP-binding</keyword>
<keyword id="KW-0963">Cytoplasm</keyword>
<keyword id="KW-0418">Kinase</keyword>
<keyword id="KW-0547">Nucleotide-binding</keyword>
<keyword id="KW-1185">Reference proteome</keyword>
<keyword id="KW-0808">Transferase</keyword>
<gene>
    <name evidence="1" type="primary">cmk</name>
    <name type="ordered locus">VC_1916</name>
</gene>
<organism>
    <name type="scientific">Vibrio cholerae serotype O1 (strain ATCC 39315 / El Tor Inaba N16961)</name>
    <dbReference type="NCBI Taxonomy" id="243277"/>
    <lineage>
        <taxon>Bacteria</taxon>
        <taxon>Pseudomonadati</taxon>
        <taxon>Pseudomonadota</taxon>
        <taxon>Gammaproteobacteria</taxon>
        <taxon>Vibrionales</taxon>
        <taxon>Vibrionaceae</taxon>
        <taxon>Vibrio</taxon>
    </lineage>
</organism>
<feature type="chain" id="PRO_0000131997" description="Cytidylate kinase">
    <location>
        <begin position="1"/>
        <end position="225"/>
    </location>
</feature>
<feature type="binding site" evidence="1">
    <location>
        <begin position="12"/>
        <end position="20"/>
    </location>
    <ligand>
        <name>ATP</name>
        <dbReference type="ChEBI" id="CHEBI:30616"/>
    </ligand>
</feature>
<protein>
    <recommendedName>
        <fullName evidence="1">Cytidylate kinase</fullName>
        <shortName evidence="1">CK</shortName>
        <ecNumber evidence="1">2.7.4.25</ecNumber>
    </recommendedName>
    <alternativeName>
        <fullName evidence="1">Cytidine monophosphate kinase</fullName>
        <shortName evidence="1">CMP kinase</shortName>
    </alternativeName>
</protein>
<accession>Q9KQT2</accession>
<sequence>MSSHTPVVTVDGPSGAGKGTLCMLLAKKLGFQLLDSGAIYRVLALAALHHGVDLESEDALVPLATHLDVQFIAEGDLVKVILEGEDVSRELRKEETGMAASKVAALPRVREALLRRQRAFASGIGLVADGRDMGTVVFPAAEAKIFLDASAEERARRRFKQLQLKGLDVKFDALLSEIQERDDRDRNRAVAPLRPAEDALVLDSTTLTIDEVVEQALQYIESKLV</sequence>
<proteinExistence type="inferred from homology"/>
<reference key="1">
    <citation type="journal article" date="2000" name="Nature">
        <title>DNA sequence of both chromosomes of the cholera pathogen Vibrio cholerae.</title>
        <authorList>
            <person name="Heidelberg J.F."/>
            <person name="Eisen J.A."/>
            <person name="Nelson W.C."/>
            <person name="Clayton R.A."/>
            <person name="Gwinn M.L."/>
            <person name="Dodson R.J."/>
            <person name="Haft D.H."/>
            <person name="Hickey E.K."/>
            <person name="Peterson J.D."/>
            <person name="Umayam L.A."/>
            <person name="Gill S.R."/>
            <person name="Nelson K.E."/>
            <person name="Read T.D."/>
            <person name="Tettelin H."/>
            <person name="Richardson D.L."/>
            <person name="Ermolaeva M.D."/>
            <person name="Vamathevan J.J."/>
            <person name="Bass S."/>
            <person name="Qin H."/>
            <person name="Dragoi I."/>
            <person name="Sellers P."/>
            <person name="McDonald L.A."/>
            <person name="Utterback T.R."/>
            <person name="Fleischmann R.D."/>
            <person name="Nierman W.C."/>
            <person name="White O."/>
            <person name="Salzberg S.L."/>
            <person name="Smith H.O."/>
            <person name="Colwell R.R."/>
            <person name="Mekalanos J.J."/>
            <person name="Venter J.C."/>
            <person name="Fraser C.M."/>
        </authorList>
    </citation>
    <scope>NUCLEOTIDE SEQUENCE [LARGE SCALE GENOMIC DNA]</scope>
    <source>
        <strain>ATCC 39315 / El Tor Inaba N16961</strain>
    </source>
</reference>
<name>KCY_VIBCH</name>
<evidence type="ECO:0000255" key="1">
    <source>
        <dbReference type="HAMAP-Rule" id="MF_00238"/>
    </source>
</evidence>
<evidence type="ECO:0000305" key="2"/>
<dbReference type="EC" id="2.7.4.25" evidence="1"/>
<dbReference type="EMBL" id="AE003852">
    <property type="protein sequence ID" value="AAF95064.1"/>
    <property type="status" value="ALT_INIT"/>
    <property type="molecule type" value="Genomic_DNA"/>
</dbReference>
<dbReference type="PIR" id="C82141">
    <property type="entry name" value="C82141"/>
</dbReference>
<dbReference type="RefSeq" id="NP_231550.1">
    <property type="nucleotide sequence ID" value="NC_002505.1"/>
</dbReference>
<dbReference type="RefSeq" id="WP_000094752.1">
    <property type="nucleotide sequence ID" value="NZ_LT906614.1"/>
</dbReference>
<dbReference type="SMR" id="Q9KQT2"/>
<dbReference type="STRING" id="243277.VC_1916"/>
<dbReference type="DNASU" id="2613545"/>
<dbReference type="EnsemblBacteria" id="AAF95064">
    <property type="protein sequence ID" value="AAF95064"/>
    <property type="gene ID" value="VC_1916"/>
</dbReference>
<dbReference type="GeneID" id="88782747"/>
<dbReference type="KEGG" id="vch:VC_1916"/>
<dbReference type="PATRIC" id="fig|243277.26.peg.1833"/>
<dbReference type="eggNOG" id="COG0283">
    <property type="taxonomic scope" value="Bacteria"/>
</dbReference>
<dbReference type="HOGENOM" id="CLU_079959_0_2_6"/>
<dbReference type="Proteomes" id="UP000000584">
    <property type="component" value="Chromosome 1"/>
</dbReference>
<dbReference type="GO" id="GO:0005829">
    <property type="term" value="C:cytosol"/>
    <property type="evidence" value="ECO:0000318"/>
    <property type="project" value="GO_Central"/>
</dbReference>
<dbReference type="GO" id="GO:0004127">
    <property type="term" value="F:(d)CMP kinase activity"/>
    <property type="evidence" value="ECO:0000318"/>
    <property type="project" value="GO_Central"/>
</dbReference>
<dbReference type="GO" id="GO:0005524">
    <property type="term" value="F:ATP binding"/>
    <property type="evidence" value="ECO:0007669"/>
    <property type="project" value="UniProtKB-UniRule"/>
</dbReference>
<dbReference type="GO" id="GO:0036430">
    <property type="term" value="F:CMP kinase activity"/>
    <property type="evidence" value="ECO:0007669"/>
    <property type="project" value="RHEA"/>
</dbReference>
<dbReference type="GO" id="GO:0036431">
    <property type="term" value="F:dCMP kinase activity"/>
    <property type="evidence" value="ECO:0007669"/>
    <property type="project" value="RHEA"/>
</dbReference>
<dbReference type="GO" id="GO:0015949">
    <property type="term" value="P:nucleobase-containing small molecule interconversion"/>
    <property type="evidence" value="ECO:0000318"/>
    <property type="project" value="GO_Central"/>
</dbReference>
<dbReference type="GO" id="GO:0006220">
    <property type="term" value="P:pyrimidine nucleotide metabolic process"/>
    <property type="evidence" value="ECO:0007669"/>
    <property type="project" value="UniProtKB-UniRule"/>
</dbReference>
<dbReference type="CDD" id="cd02020">
    <property type="entry name" value="CMPK"/>
    <property type="match status" value="1"/>
</dbReference>
<dbReference type="FunFam" id="3.40.50.300:FF:000262">
    <property type="entry name" value="Cytidylate kinase"/>
    <property type="match status" value="1"/>
</dbReference>
<dbReference type="Gene3D" id="3.40.50.300">
    <property type="entry name" value="P-loop containing nucleotide triphosphate hydrolases"/>
    <property type="match status" value="1"/>
</dbReference>
<dbReference type="HAMAP" id="MF_00238">
    <property type="entry name" value="Cytidyl_kinase_type1"/>
    <property type="match status" value="1"/>
</dbReference>
<dbReference type="InterPro" id="IPR003136">
    <property type="entry name" value="Cytidylate_kin"/>
</dbReference>
<dbReference type="InterPro" id="IPR011994">
    <property type="entry name" value="Cytidylate_kinase_dom"/>
</dbReference>
<dbReference type="InterPro" id="IPR027417">
    <property type="entry name" value="P-loop_NTPase"/>
</dbReference>
<dbReference type="NCBIfam" id="TIGR00017">
    <property type="entry name" value="cmk"/>
    <property type="match status" value="1"/>
</dbReference>
<dbReference type="PANTHER" id="PTHR21299:SF2">
    <property type="entry name" value="CYTIDYLATE KINASE"/>
    <property type="match status" value="1"/>
</dbReference>
<dbReference type="PANTHER" id="PTHR21299">
    <property type="entry name" value="CYTIDYLATE KINASE/PANTOATE-BETA-ALANINE LIGASE"/>
    <property type="match status" value="1"/>
</dbReference>
<dbReference type="Pfam" id="PF02224">
    <property type="entry name" value="Cytidylate_kin"/>
    <property type="match status" value="1"/>
</dbReference>
<dbReference type="SUPFAM" id="SSF52540">
    <property type="entry name" value="P-loop containing nucleoside triphosphate hydrolases"/>
    <property type="match status" value="1"/>
</dbReference>